<accession>Q5HAU6</accession>
<accession>Q5FD39</accession>
<feature type="chain" id="PRO_1000055821" description="Large ribosomal subunit protein bL17">
    <location>
        <begin position="1"/>
        <end position="128"/>
    </location>
</feature>
<proteinExistence type="inferred from homology"/>
<protein>
    <recommendedName>
        <fullName evidence="1">Large ribosomal subunit protein bL17</fullName>
    </recommendedName>
    <alternativeName>
        <fullName evidence="2">50S ribosomal protein L17</fullName>
    </alternativeName>
</protein>
<gene>
    <name evidence="1" type="primary">rplQ</name>
    <name type="ordered locus">Erum5840</name>
    <name type="ordered locus">ERWE_CDS_06140</name>
</gene>
<comment type="subunit">
    <text evidence="1">Part of the 50S ribosomal subunit. Contacts protein L32.</text>
</comment>
<comment type="similarity">
    <text evidence="1">Belongs to the bacterial ribosomal protein bL17 family.</text>
</comment>
<organism>
    <name type="scientific">Ehrlichia ruminantium (strain Welgevonden)</name>
    <dbReference type="NCBI Taxonomy" id="254945"/>
    <lineage>
        <taxon>Bacteria</taxon>
        <taxon>Pseudomonadati</taxon>
        <taxon>Pseudomonadota</taxon>
        <taxon>Alphaproteobacteria</taxon>
        <taxon>Rickettsiales</taxon>
        <taxon>Anaplasmataceae</taxon>
        <taxon>Ehrlichia</taxon>
    </lineage>
</organism>
<reference key="1">
    <citation type="journal article" date="2005" name="Proc. Natl. Acad. Sci. U.S.A.">
        <title>The genome of the heartwater agent Ehrlichia ruminantium contains multiple tandem repeats of actively variable copy number.</title>
        <authorList>
            <person name="Collins N.E."/>
            <person name="Liebenberg J."/>
            <person name="de Villiers E.P."/>
            <person name="Brayton K.A."/>
            <person name="Louw E."/>
            <person name="Pretorius A."/>
            <person name="Faber F.E."/>
            <person name="van Heerden H."/>
            <person name="Josemans A."/>
            <person name="van Kleef M."/>
            <person name="Steyn H.C."/>
            <person name="van Strijp M.F."/>
            <person name="Zweygarth E."/>
            <person name="Jongejan F."/>
            <person name="Maillard J.C."/>
            <person name="Berthier D."/>
            <person name="Botha M."/>
            <person name="Joubert F."/>
            <person name="Corton C.H."/>
            <person name="Thomson N.R."/>
            <person name="Allsopp M.T."/>
            <person name="Allsopp B.A."/>
        </authorList>
    </citation>
    <scope>NUCLEOTIDE SEQUENCE [LARGE SCALE GENOMIC DNA]</scope>
    <source>
        <strain>Welgevonden</strain>
    </source>
</reference>
<reference key="2">
    <citation type="journal article" date="2006" name="J. Bacteriol.">
        <title>Comparative genomic analysis of three strains of Ehrlichia ruminantium reveals an active process of genome size plasticity.</title>
        <authorList>
            <person name="Frutos R."/>
            <person name="Viari A."/>
            <person name="Ferraz C."/>
            <person name="Morgat A."/>
            <person name="Eychenie S."/>
            <person name="Kandassamy Y."/>
            <person name="Chantal I."/>
            <person name="Bensaid A."/>
            <person name="Coissac E."/>
            <person name="Vachiery N."/>
            <person name="Demaille J."/>
            <person name="Martinez D."/>
        </authorList>
    </citation>
    <scope>NUCLEOTIDE SEQUENCE [LARGE SCALE GENOMIC DNA]</scope>
    <source>
        <strain>Welgevonden</strain>
    </source>
</reference>
<evidence type="ECO:0000255" key="1">
    <source>
        <dbReference type="HAMAP-Rule" id="MF_01368"/>
    </source>
</evidence>
<evidence type="ECO:0000305" key="2"/>
<name>RL17_EHRRW</name>
<sequence>MRHRVAHRKFSRTSAHRISMLLNLSISLIKHERITTTLPKAKELRPYVEKLITIGKVYREKNLVYGKRLLISKLKNIDATDKLIDVLSVRYKSRNGGYTRIMKNGFRKGDCAPIAIIELVDRQIVSQS</sequence>
<keyword id="KW-0687">Ribonucleoprotein</keyword>
<keyword id="KW-0689">Ribosomal protein</keyword>
<dbReference type="EMBL" id="CR767821">
    <property type="protein sequence ID" value="CAH58315.1"/>
    <property type="molecule type" value="Genomic_DNA"/>
</dbReference>
<dbReference type="EMBL" id="CR925678">
    <property type="protein sequence ID" value="CAI27108.1"/>
    <property type="molecule type" value="Genomic_DNA"/>
</dbReference>
<dbReference type="RefSeq" id="WP_011155265.1">
    <property type="nucleotide sequence ID" value="NC_005295.2"/>
</dbReference>
<dbReference type="SMR" id="Q5HAU6"/>
<dbReference type="GeneID" id="33057641"/>
<dbReference type="KEGG" id="eru:Erum5840"/>
<dbReference type="KEGG" id="erw:ERWE_CDS_06140"/>
<dbReference type="eggNOG" id="COG0203">
    <property type="taxonomic scope" value="Bacteria"/>
</dbReference>
<dbReference type="HOGENOM" id="CLU_074407_2_0_5"/>
<dbReference type="Proteomes" id="UP000001021">
    <property type="component" value="Chromosome"/>
</dbReference>
<dbReference type="GO" id="GO:0022625">
    <property type="term" value="C:cytosolic large ribosomal subunit"/>
    <property type="evidence" value="ECO:0007669"/>
    <property type="project" value="TreeGrafter"/>
</dbReference>
<dbReference type="GO" id="GO:0003735">
    <property type="term" value="F:structural constituent of ribosome"/>
    <property type="evidence" value="ECO:0007669"/>
    <property type="project" value="InterPro"/>
</dbReference>
<dbReference type="GO" id="GO:0006412">
    <property type="term" value="P:translation"/>
    <property type="evidence" value="ECO:0007669"/>
    <property type="project" value="UniProtKB-UniRule"/>
</dbReference>
<dbReference type="Gene3D" id="3.90.1030.10">
    <property type="entry name" value="Ribosomal protein L17"/>
    <property type="match status" value="1"/>
</dbReference>
<dbReference type="HAMAP" id="MF_01368">
    <property type="entry name" value="Ribosomal_bL17"/>
    <property type="match status" value="1"/>
</dbReference>
<dbReference type="InterPro" id="IPR000456">
    <property type="entry name" value="Ribosomal_bL17"/>
</dbReference>
<dbReference type="InterPro" id="IPR047859">
    <property type="entry name" value="Ribosomal_bL17_CS"/>
</dbReference>
<dbReference type="InterPro" id="IPR036373">
    <property type="entry name" value="Ribosomal_bL17_sf"/>
</dbReference>
<dbReference type="NCBIfam" id="TIGR00059">
    <property type="entry name" value="L17"/>
    <property type="match status" value="1"/>
</dbReference>
<dbReference type="PANTHER" id="PTHR14413:SF16">
    <property type="entry name" value="LARGE RIBOSOMAL SUBUNIT PROTEIN BL17M"/>
    <property type="match status" value="1"/>
</dbReference>
<dbReference type="PANTHER" id="PTHR14413">
    <property type="entry name" value="RIBOSOMAL PROTEIN L17"/>
    <property type="match status" value="1"/>
</dbReference>
<dbReference type="Pfam" id="PF01196">
    <property type="entry name" value="Ribosomal_L17"/>
    <property type="match status" value="1"/>
</dbReference>
<dbReference type="SUPFAM" id="SSF64263">
    <property type="entry name" value="Prokaryotic ribosomal protein L17"/>
    <property type="match status" value="1"/>
</dbReference>
<dbReference type="PROSITE" id="PS01167">
    <property type="entry name" value="RIBOSOMAL_L17"/>
    <property type="match status" value="1"/>
</dbReference>